<organism>
    <name type="scientific">Pongo abelii</name>
    <name type="common">Sumatran orangutan</name>
    <name type="synonym">Pongo pygmaeus abelii</name>
    <dbReference type="NCBI Taxonomy" id="9601"/>
    <lineage>
        <taxon>Eukaryota</taxon>
        <taxon>Metazoa</taxon>
        <taxon>Chordata</taxon>
        <taxon>Craniata</taxon>
        <taxon>Vertebrata</taxon>
        <taxon>Euteleostomi</taxon>
        <taxon>Mammalia</taxon>
        <taxon>Eutheria</taxon>
        <taxon>Euarchontoglires</taxon>
        <taxon>Primates</taxon>
        <taxon>Haplorrhini</taxon>
        <taxon>Catarrhini</taxon>
        <taxon>Hominidae</taxon>
        <taxon>Pongo</taxon>
    </lineage>
</organism>
<accession>Q5R5C2</accession>
<protein>
    <recommendedName>
        <fullName>Bifunctional purine biosynthesis protein ATIC</fullName>
    </recommendedName>
    <alternativeName>
        <fullName>AICAR transformylase/inosine monophosphate cyclohydrolase</fullName>
        <shortName>ATIC</shortName>
    </alternativeName>
    <domain>
        <recommendedName>
            <fullName>Phosphoribosylaminoimidazolecarboxamide formyltransferase</fullName>
            <ecNumber evidence="2">2.1.2.3</ecNumber>
        </recommendedName>
        <alternativeName>
            <fullName>5-aminoimidazole-4-carboxamide ribonucleotide formyltransferase</fullName>
            <shortName>AICAR formyltransferase</shortName>
        </alternativeName>
        <alternativeName>
            <fullName>AICAR transformylase</fullName>
        </alternativeName>
    </domain>
    <domain>
        <recommendedName>
            <fullName evidence="5">Inosine 5'-monophosphate cyclohydrolase</fullName>
            <shortName evidence="5">IMP cyclohydrolase</shortName>
            <ecNumber evidence="2">3.5.4.10</ecNumber>
        </recommendedName>
        <alternativeName>
            <fullName>IMP synthase</fullName>
        </alternativeName>
        <alternativeName>
            <fullName>Inosinicase</fullName>
        </alternativeName>
    </domain>
</protein>
<comment type="function">
    <text evidence="2">Bifunctional enzyme that catalyzes the last two steps of purine biosynthesis. Acts as a transformylase that incorporates a formyl group to the AMP analog AICAR (5-amino-1-(5-phospho-beta-D-ribosyl)imidazole-4-carboxamide) to produce the intermediate formyl-AICAR (FAICAR). Can use both 10-formyldihydrofolate and 10-formyltetrahydrofolate as the formyl donor in this reaction. Also catalyzes the cyclization of FAICAR to inosine monophosphate (IMP). Promotes insulin receptor/INSR autophosphorylation and is involved in INSR internalization.</text>
</comment>
<comment type="catalytic activity">
    <reaction evidence="2">
        <text>(6R)-10-formyltetrahydrofolate + 5-amino-1-(5-phospho-beta-D-ribosyl)imidazole-4-carboxamide = 5-formamido-1-(5-phospho-D-ribosyl)imidazole-4-carboxamide + (6S)-5,6,7,8-tetrahydrofolate</text>
        <dbReference type="Rhea" id="RHEA:22192"/>
        <dbReference type="ChEBI" id="CHEBI:57453"/>
        <dbReference type="ChEBI" id="CHEBI:58467"/>
        <dbReference type="ChEBI" id="CHEBI:58475"/>
        <dbReference type="ChEBI" id="CHEBI:195366"/>
        <dbReference type="EC" id="2.1.2.3"/>
    </reaction>
    <physiologicalReaction direction="left-to-right" evidence="2">
        <dbReference type="Rhea" id="RHEA:22193"/>
    </physiologicalReaction>
</comment>
<comment type="catalytic activity">
    <reaction evidence="2">
        <text>10-formyldihydrofolate + 5-amino-1-(5-phospho-beta-D-ribosyl)imidazole-4-carboxamide = 5-formamido-1-(5-phospho-D-ribosyl)imidazole-4-carboxamide + 7,8-dihydrofolate</text>
        <dbReference type="Rhea" id="RHEA:59144"/>
        <dbReference type="ChEBI" id="CHEBI:57451"/>
        <dbReference type="ChEBI" id="CHEBI:57452"/>
        <dbReference type="ChEBI" id="CHEBI:58467"/>
        <dbReference type="ChEBI" id="CHEBI:58475"/>
    </reaction>
    <physiologicalReaction direction="left-to-right" evidence="2">
        <dbReference type="Rhea" id="RHEA:59145"/>
    </physiologicalReaction>
</comment>
<comment type="catalytic activity">
    <reaction evidence="2">
        <text>IMP + H2O = 5-formamido-1-(5-phospho-D-ribosyl)imidazole-4-carboxamide</text>
        <dbReference type="Rhea" id="RHEA:18445"/>
        <dbReference type="ChEBI" id="CHEBI:15377"/>
        <dbReference type="ChEBI" id="CHEBI:58053"/>
        <dbReference type="ChEBI" id="CHEBI:58467"/>
        <dbReference type="EC" id="3.5.4.10"/>
    </reaction>
    <physiologicalReaction direction="right-to-left" evidence="2">
        <dbReference type="Rhea" id="RHEA:18447"/>
    </physiologicalReaction>
</comment>
<comment type="activity regulation">
    <text evidence="2">AMP and XMP inhibit AICAR formyltransferase activity.</text>
</comment>
<comment type="pathway">
    <text evidence="2">Purine metabolism; IMP biosynthesis via de novo pathway; 5-formamido-1-(5-phospho-D-ribosyl)imidazole-4-carboxamide from 5-amino-1-(5-phospho-D-ribosyl)imidazole-4-carboxamide (10-formyl THF route): step 1/1.</text>
</comment>
<comment type="pathway">
    <text evidence="2">Purine metabolism; IMP biosynthesis via de novo pathway; IMP from 5-formamido-1-(5-phospho-D-ribosyl)imidazole-4-carboxamide: step 1/1.</text>
</comment>
<comment type="subunit">
    <text evidence="2">Homodimer. Associates with internalized INSR complexes on Golgi/endosomal membranes. Interacts with INSR; ATIC together with PRKAA2/AMPK2 and HACD3/PTPLAD1 is proposed to be part of a signaling network regulating INSR autophosphorylation and endocytosis.</text>
</comment>
<comment type="subcellular location">
    <subcellularLocation>
        <location evidence="3">Cytoplasm</location>
        <location evidence="3">Cytosol</location>
    </subcellularLocation>
</comment>
<comment type="domain">
    <text evidence="2">The IMP cyclohydrolase activity resides in the N-terminal region.</text>
</comment>
<comment type="miscellaneous">
    <text evidence="2">The de novo purine synthesis pathway includes 10 sequential steps, beginning with phosphoribosyl pyrophosphate and ending with inosine monophosphate (IMP), the first purine compound of the pathway.</text>
</comment>
<comment type="similarity">
    <text evidence="5">Belongs to the PurH family.</text>
</comment>
<name>PUR9_PONAB</name>
<keyword id="KW-0007">Acetylation</keyword>
<keyword id="KW-0963">Cytoplasm</keyword>
<keyword id="KW-0378">Hydrolase</keyword>
<keyword id="KW-0511">Multifunctional enzyme</keyword>
<keyword id="KW-0658">Purine biosynthesis</keyword>
<keyword id="KW-1185">Reference proteome</keyword>
<keyword id="KW-0808">Transferase</keyword>
<reference key="1">
    <citation type="submission" date="2004-11" db="EMBL/GenBank/DDBJ databases">
        <authorList>
            <consortium name="The German cDNA consortium"/>
        </authorList>
    </citation>
    <scope>NUCLEOTIDE SEQUENCE [LARGE SCALE MRNA]</scope>
    <source>
        <tissue>Kidney</tissue>
    </source>
</reference>
<dbReference type="EC" id="2.1.2.3" evidence="2"/>
<dbReference type="EC" id="3.5.4.10" evidence="2"/>
<dbReference type="EMBL" id="CR860940">
    <property type="protein sequence ID" value="CAH93044.1"/>
    <property type="molecule type" value="mRNA"/>
</dbReference>
<dbReference type="RefSeq" id="NP_001126800.1">
    <property type="nucleotide sequence ID" value="NM_001133328.1"/>
</dbReference>
<dbReference type="SMR" id="Q5R5C2"/>
<dbReference type="FunCoup" id="Q5R5C2">
    <property type="interactions" value="2076"/>
</dbReference>
<dbReference type="STRING" id="9601.ENSPPYP00000014690"/>
<dbReference type="GeneID" id="100173804"/>
<dbReference type="KEGG" id="pon:100173804"/>
<dbReference type="CTD" id="471"/>
<dbReference type="eggNOG" id="KOG2555">
    <property type="taxonomic scope" value="Eukaryota"/>
</dbReference>
<dbReference type="InParanoid" id="Q5R5C2"/>
<dbReference type="OrthoDB" id="6017153at2759"/>
<dbReference type="UniPathway" id="UPA00074">
    <property type="reaction ID" value="UER00133"/>
</dbReference>
<dbReference type="UniPathway" id="UPA00074">
    <property type="reaction ID" value="UER00135"/>
</dbReference>
<dbReference type="Proteomes" id="UP000001595">
    <property type="component" value="Unplaced"/>
</dbReference>
<dbReference type="GO" id="GO:0005829">
    <property type="term" value="C:cytosol"/>
    <property type="evidence" value="ECO:0007669"/>
    <property type="project" value="UniProtKB-SubCell"/>
</dbReference>
<dbReference type="GO" id="GO:0003937">
    <property type="term" value="F:IMP cyclohydrolase activity"/>
    <property type="evidence" value="ECO:0007669"/>
    <property type="project" value="UniProtKB-EC"/>
</dbReference>
<dbReference type="GO" id="GO:0004643">
    <property type="term" value="F:phosphoribosylaminoimidazolecarboxamide formyltransferase activity"/>
    <property type="evidence" value="ECO:0007669"/>
    <property type="project" value="UniProtKB-EC"/>
</dbReference>
<dbReference type="GO" id="GO:0042803">
    <property type="term" value="F:protein homodimerization activity"/>
    <property type="evidence" value="ECO:0000250"/>
    <property type="project" value="UniProtKB"/>
</dbReference>
<dbReference type="GO" id="GO:0006189">
    <property type="term" value="P:'de novo' IMP biosynthetic process"/>
    <property type="evidence" value="ECO:0007669"/>
    <property type="project" value="UniProtKB-UniPathway"/>
</dbReference>
<dbReference type="CDD" id="cd01421">
    <property type="entry name" value="IMPCH"/>
    <property type="match status" value="1"/>
</dbReference>
<dbReference type="FunFam" id="3.40.50.1380:FF:000003">
    <property type="entry name" value="Bifunctional purine biosynthesis protein"/>
    <property type="match status" value="1"/>
</dbReference>
<dbReference type="FunFam" id="1.10.287.440:FF:000001">
    <property type="entry name" value="Bifunctional purine biosynthesis protein PURH"/>
    <property type="match status" value="1"/>
</dbReference>
<dbReference type="FunFam" id="3.40.140.20:FF:000008">
    <property type="entry name" value="Bifunctional purine biosynthesis protein PURH"/>
    <property type="match status" value="1"/>
</dbReference>
<dbReference type="Gene3D" id="1.10.287.440">
    <property type="match status" value="1"/>
</dbReference>
<dbReference type="Gene3D" id="3.40.140.20">
    <property type="match status" value="2"/>
</dbReference>
<dbReference type="Gene3D" id="3.40.50.1380">
    <property type="entry name" value="Methylglyoxal synthase-like domain"/>
    <property type="match status" value="1"/>
</dbReference>
<dbReference type="HAMAP" id="MF_00139">
    <property type="entry name" value="PurH"/>
    <property type="match status" value="1"/>
</dbReference>
<dbReference type="InterPro" id="IPR024051">
    <property type="entry name" value="AICAR_Tfase_dup_dom_sf"/>
</dbReference>
<dbReference type="InterPro" id="IPR024050">
    <property type="entry name" value="AICAR_Tfase_insert_dom_sf"/>
</dbReference>
<dbReference type="InterPro" id="IPR016193">
    <property type="entry name" value="Cytidine_deaminase-like"/>
</dbReference>
<dbReference type="InterPro" id="IPR011607">
    <property type="entry name" value="MGS-like_dom"/>
</dbReference>
<dbReference type="InterPro" id="IPR036914">
    <property type="entry name" value="MGS-like_dom_sf"/>
</dbReference>
<dbReference type="InterPro" id="IPR002695">
    <property type="entry name" value="PurH-like"/>
</dbReference>
<dbReference type="NCBIfam" id="NF005492">
    <property type="entry name" value="PRK07106.1"/>
    <property type="match status" value="1"/>
</dbReference>
<dbReference type="NCBIfam" id="TIGR00355">
    <property type="entry name" value="purH"/>
    <property type="match status" value="1"/>
</dbReference>
<dbReference type="PANTHER" id="PTHR11692:SF0">
    <property type="entry name" value="BIFUNCTIONAL PURINE BIOSYNTHESIS PROTEIN ATIC"/>
    <property type="match status" value="1"/>
</dbReference>
<dbReference type="PANTHER" id="PTHR11692">
    <property type="entry name" value="BIFUNCTIONAL PURINE BIOSYNTHESIS PROTEIN PURH"/>
    <property type="match status" value="1"/>
</dbReference>
<dbReference type="Pfam" id="PF01808">
    <property type="entry name" value="AICARFT_IMPCHas"/>
    <property type="match status" value="1"/>
</dbReference>
<dbReference type="Pfam" id="PF02142">
    <property type="entry name" value="MGS"/>
    <property type="match status" value="1"/>
</dbReference>
<dbReference type="PIRSF" id="PIRSF000414">
    <property type="entry name" value="AICARFT_IMPCHas"/>
    <property type="match status" value="1"/>
</dbReference>
<dbReference type="SMART" id="SM00798">
    <property type="entry name" value="AICARFT_IMPCHas"/>
    <property type="match status" value="1"/>
</dbReference>
<dbReference type="SMART" id="SM00851">
    <property type="entry name" value="MGS"/>
    <property type="match status" value="1"/>
</dbReference>
<dbReference type="SUPFAM" id="SSF53927">
    <property type="entry name" value="Cytidine deaminase-like"/>
    <property type="match status" value="1"/>
</dbReference>
<dbReference type="SUPFAM" id="SSF52335">
    <property type="entry name" value="Methylglyoxal synthase-like"/>
    <property type="match status" value="1"/>
</dbReference>
<dbReference type="PROSITE" id="PS51855">
    <property type="entry name" value="MGS"/>
    <property type="match status" value="1"/>
</dbReference>
<gene>
    <name type="primary">ATIC</name>
    <name type="synonym">PURH</name>
</gene>
<proteinExistence type="evidence at transcript level"/>
<sequence length="592" mass="64693">MAPGHLALFSVSDKTGLVEFARNLTALGLNLVASGGTAKALRDAGLAVRDVSELTGFPEMLGGRVKTLHPAVHAGILARNIPEDNADMARLDFNLIRVVACNLYPFVKTVASPGVTVEEAVEQIDIGGVTLLRAAAKNHARVTVVCEPEDYVVVSTEMKSSEIKDTSLETRRQLALKAFTHTAQYDEAISDYFRKQYSKGISQMPLRYGMNPHQTPAQLYTLKPKLPITVLNGAPGFINLCDALNAWQLVKELKEALGIPAAASFKHVSPAGAAVGIPLSEDEAKVCMVYDLYKTLTPISAAYARARGADRMSSFGDFVALSDVCDVPTAKIISREVSDGIIAPGYEEEALKILSKKKNGNYCVLQMDQSYKPDENEVRTLFGLHLSQKRNNGVVDKSLFSNVVTKNKDLPESALRDLIVATIAVKYTQSNSVCYAKNGQVIGIGAGQQSRIHCTRLAGDKANYWWLRHHPQVLSMKFKTGVKRAEISNAIDQYVTGTIGEDEDLIKWEALFEEVPELLTEAEKKEWVEKLTEVSISSDAFFPFRDNVDRAKRSGVAYIAAPSGSAADKVVIEACDELGIILAHTNLRLFHH</sequence>
<evidence type="ECO:0000250" key="1">
    <source>
        <dbReference type="UniProtKB" id="P31335"/>
    </source>
</evidence>
<evidence type="ECO:0000250" key="2">
    <source>
        <dbReference type="UniProtKB" id="P31939"/>
    </source>
</evidence>
<evidence type="ECO:0000250" key="3">
    <source>
        <dbReference type="UniProtKB" id="P54113"/>
    </source>
</evidence>
<evidence type="ECO:0000255" key="4">
    <source>
        <dbReference type="PROSITE-ProRule" id="PRU01202"/>
    </source>
</evidence>
<evidence type="ECO:0000305" key="5"/>
<feature type="chain" id="PRO_0000270213" description="Bifunctional purine biosynthesis protein ATIC">
    <location>
        <begin position="1"/>
        <end position="592"/>
    </location>
</feature>
<feature type="domain" description="MGS-like" evidence="4">
    <location>
        <begin position="1"/>
        <end position="146"/>
    </location>
</feature>
<feature type="region of interest" description="IMP cyclohydrolase" evidence="1">
    <location>
        <begin position="1"/>
        <end position="198"/>
    </location>
</feature>
<feature type="region of interest" description="AICAR formyltransferase" evidence="1">
    <location>
        <begin position="199"/>
        <end position="592"/>
    </location>
</feature>
<feature type="active site" description="Proton donor/acceptor; for FAICAR cyclization activity" evidence="2">
    <location>
        <position position="137"/>
    </location>
</feature>
<feature type="active site" description="Proton acceptor; for AICAR formyltransferase activity" evidence="2">
    <location>
        <position position="267"/>
    </location>
</feature>
<feature type="binding site" evidence="2">
    <location>
        <begin position="12"/>
        <end position="14"/>
    </location>
    <ligand>
        <name>IMP</name>
        <dbReference type="ChEBI" id="CHEBI:58053"/>
    </ligand>
</feature>
<feature type="binding site" evidence="2">
    <location>
        <begin position="34"/>
        <end position="37"/>
    </location>
    <ligand>
        <name>IMP</name>
        <dbReference type="ChEBI" id="CHEBI:58053"/>
    </ligand>
</feature>
<feature type="binding site" evidence="2">
    <location>
        <begin position="64"/>
        <end position="67"/>
    </location>
    <ligand>
        <name>IMP</name>
        <dbReference type="ChEBI" id="CHEBI:58053"/>
    </ligand>
</feature>
<feature type="binding site" evidence="2">
    <location>
        <begin position="101"/>
        <end position="102"/>
    </location>
    <ligand>
        <name>IMP</name>
        <dbReference type="ChEBI" id="CHEBI:58053"/>
    </ligand>
</feature>
<feature type="binding site" evidence="2">
    <location>
        <begin position="125"/>
        <end position="126"/>
    </location>
    <ligand>
        <name>IMP</name>
        <dbReference type="ChEBI" id="CHEBI:58053"/>
    </ligand>
</feature>
<feature type="binding site" description="in other chain" evidence="2">
    <location>
        <begin position="207"/>
        <end position="208"/>
    </location>
    <ligand>
        <name>5-amino-1-(5-phospho-beta-D-ribosyl)imidazole-4-carboxamide</name>
        <dbReference type="ChEBI" id="CHEBI:58475"/>
        <note>ligand shared between dimeric partners</note>
    </ligand>
</feature>
<feature type="binding site" description="in other chain" evidence="2">
    <location>
        <position position="267"/>
    </location>
    <ligand>
        <name>5-amino-1-(5-phospho-beta-D-ribosyl)imidazole-4-carboxamide</name>
        <dbReference type="ChEBI" id="CHEBI:58475"/>
        <note>ligand shared between dimeric partners</note>
    </ligand>
</feature>
<feature type="binding site" description="in other chain" evidence="2">
    <location>
        <position position="316"/>
    </location>
    <ligand>
        <name>5-amino-1-(5-phospho-beta-D-ribosyl)imidazole-4-carboxamide</name>
        <dbReference type="ChEBI" id="CHEBI:58475"/>
        <note>ligand shared between dimeric partners</note>
    </ligand>
</feature>
<feature type="binding site" description="in other chain" evidence="2">
    <location>
        <position position="339"/>
    </location>
    <ligand>
        <name>5-amino-1-(5-phospho-beta-D-ribosyl)imidazole-4-carboxamide</name>
        <dbReference type="ChEBI" id="CHEBI:58475"/>
        <note>ligand shared between dimeric partners</note>
    </ligand>
</feature>
<feature type="binding site" evidence="2">
    <location>
        <position position="431"/>
    </location>
    <ligand>
        <name>5-amino-1-(5-phospho-beta-D-ribosyl)imidazole-4-carboxamide</name>
        <dbReference type="ChEBI" id="CHEBI:58475"/>
        <note>ligand shared between dimeric partners</note>
    </ligand>
</feature>
<feature type="binding site" evidence="2">
    <location>
        <position position="451"/>
    </location>
    <ligand>
        <name>5-amino-1-(5-phospho-beta-D-ribosyl)imidazole-4-carboxamide</name>
        <dbReference type="ChEBI" id="CHEBI:58475"/>
        <note>ligand shared between dimeric partners</note>
    </ligand>
</feature>
<feature type="binding site" evidence="1">
    <location>
        <position position="452"/>
    </location>
    <ligand>
        <name>(6R)-10-formyltetrahydrofolate</name>
        <dbReference type="ChEBI" id="CHEBI:195366"/>
    </ligand>
</feature>
<feature type="binding site" evidence="2">
    <location>
        <position position="541"/>
    </location>
    <ligand>
        <name>5-amino-1-(5-phospho-beta-D-ribosyl)imidazole-4-carboxamide</name>
        <dbReference type="ChEBI" id="CHEBI:58475"/>
        <note>ligand shared between dimeric partners</note>
    </ligand>
</feature>
<feature type="binding site" evidence="1">
    <location>
        <position position="546"/>
    </location>
    <ligand>
        <name>(6R)-10-formyltetrahydrofolate</name>
        <dbReference type="ChEBI" id="CHEBI:195366"/>
    </ligand>
</feature>
<feature type="binding site" evidence="1">
    <location>
        <begin position="565"/>
        <end position="566"/>
    </location>
    <ligand>
        <name>(6R)-10-formyltetrahydrofolate</name>
        <dbReference type="ChEBI" id="CHEBI:195366"/>
    </ligand>
</feature>
<feature type="binding site" evidence="2">
    <location>
        <position position="588"/>
    </location>
    <ligand>
        <name>5-amino-1-(5-phospho-beta-D-ribosyl)imidazole-4-carboxamide</name>
        <dbReference type="ChEBI" id="CHEBI:58475"/>
        <note>ligand shared between dimeric partners</note>
    </ligand>
</feature>
<feature type="site" description="Transition state stabilizer" evidence="2">
    <location>
        <position position="266"/>
    </location>
</feature>
<feature type="modified residue" description="N-acetylmethionine" evidence="2">
    <location>
        <position position="1"/>
    </location>
</feature>
<feature type="modified residue" description="N6-acetyllysine" evidence="2">
    <location>
        <position position="199"/>
    </location>
</feature>